<organism>
    <name type="scientific">Arabidopsis thaliana</name>
    <name type="common">Mouse-ear cress</name>
    <dbReference type="NCBI Taxonomy" id="3702"/>
    <lineage>
        <taxon>Eukaryota</taxon>
        <taxon>Viridiplantae</taxon>
        <taxon>Streptophyta</taxon>
        <taxon>Embryophyta</taxon>
        <taxon>Tracheophyta</taxon>
        <taxon>Spermatophyta</taxon>
        <taxon>Magnoliopsida</taxon>
        <taxon>eudicotyledons</taxon>
        <taxon>Gunneridae</taxon>
        <taxon>Pentapetalae</taxon>
        <taxon>rosids</taxon>
        <taxon>malvids</taxon>
        <taxon>Brassicales</taxon>
        <taxon>Brassicaceae</taxon>
        <taxon>Camelineae</taxon>
        <taxon>Arabidopsis</taxon>
    </lineage>
</organism>
<sequence length="197" mass="21813">MSKATIELDFLGLEKKQTNNAPKPKFQKFLDRRRSFRDIQGAISKIDPEIIKSLLASTGNNSDSSAKSRSVPSTPREDQPQIPISPVHASLARSSTELVSGTVPMTIFYNGSVSVFQVSRNKAGEIMKVANEAASKKDESSMETDLSVILPTTLRPKLFGQNLEGDLPIARRKSLQRFLEKRKERLVSTSPYYPTSA</sequence>
<dbReference type="EMBL" id="FJ417331">
    <property type="protein sequence ID" value="ACN58542.1"/>
    <property type="molecule type" value="mRNA"/>
</dbReference>
<dbReference type="EMBL" id="AL163491">
    <property type="protein sequence ID" value="CAB86629.1"/>
    <property type="status" value="ALT_SEQ"/>
    <property type="molecule type" value="Genomic_DNA"/>
</dbReference>
<dbReference type="EMBL" id="CP002688">
    <property type="protein sequence ID" value="AED91865.1"/>
    <property type="molecule type" value="Genomic_DNA"/>
</dbReference>
<dbReference type="EMBL" id="CP002688">
    <property type="protein sequence ID" value="AED91866.1"/>
    <property type="molecule type" value="Genomic_DNA"/>
</dbReference>
<dbReference type="EMBL" id="CP002688">
    <property type="protein sequence ID" value="AED91867.1"/>
    <property type="molecule type" value="Genomic_DNA"/>
</dbReference>
<dbReference type="EMBL" id="CP002688">
    <property type="protein sequence ID" value="AED91868.1"/>
    <property type="molecule type" value="Genomic_DNA"/>
</dbReference>
<dbReference type="EMBL" id="AY056444">
    <property type="protein sequence ID" value="AAL08300.1"/>
    <property type="molecule type" value="mRNA"/>
</dbReference>
<dbReference type="EMBL" id="AY081715">
    <property type="protein sequence ID" value="AAL87368.1"/>
    <property type="molecule type" value="mRNA"/>
</dbReference>
<dbReference type="EMBL" id="BX833870">
    <property type="status" value="NOT_ANNOTATED_CDS"/>
    <property type="molecule type" value="mRNA"/>
</dbReference>
<dbReference type="PIR" id="T48569">
    <property type="entry name" value="T48569"/>
</dbReference>
<dbReference type="RefSeq" id="NP_001154713.1">
    <molecule id="Q93ZM9-3"/>
    <property type="nucleotide sequence ID" value="NM_001161241.2"/>
</dbReference>
<dbReference type="RefSeq" id="NP_568287.1">
    <molecule id="Q93ZM9-1"/>
    <property type="nucleotide sequence ID" value="NM_121325.3"/>
</dbReference>
<dbReference type="RefSeq" id="NP_974775.1">
    <molecule id="Q93ZM9-2"/>
    <property type="nucleotide sequence ID" value="NM_203046.3"/>
</dbReference>
<dbReference type="RefSeq" id="NP_974776.1">
    <molecule id="Q93ZM9-2"/>
    <property type="nucleotide sequence ID" value="NM_203047.3"/>
</dbReference>
<dbReference type="PDB" id="5T0F">
    <property type="method" value="X-ray"/>
    <property type="resolution" value="2.40 A"/>
    <property type="chains" value="B=16-58"/>
</dbReference>
<dbReference type="PDB" id="5T0Q">
    <property type="method" value="X-ray"/>
    <property type="resolution" value="2.15 A"/>
    <property type="chains" value="B=166-192"/>
</dbReference>
<dbReference type="PDBsum" id="5T0F"/>
<dbReference type="PDBsum" id="5T0Q"/>
<dbReference type="SMR" id="Q93ZM9"/>
<dbReference type="BioGRID" id="16440">
    <property type="interactions" value="24"/>
</dbReference>
<dbReference type="DIP" id="DIP-53276N"/>
<dbReference type="ELM" id="Q93ZM9"/>
<dbReference type="FunCoup" id="Q93ZM9">
    <property type="interactions" value="354"/>
</dbReference>
<dbReference type="IntAct" id="Q93ZM9">
    <property type="interactions" value="9"/>
</dbReference>
<dbReference type="STRING" id="3702.Q93ZM9"/>
<dbReference type="PaxDb" id="3702-AT5G13220.1"/>
<dbReference type="ProteomicsDB" id="234330">
    <molecule id="Q93ZM9-1"/>
</dbReference>
<dbReference type="EnsemblPlants" id="AT5G13220.1">
    <molecule id="Q93ZM9-1"/>
    <property type="protein sequence ID" value="AT5G13220.1"/>
    <property type="gene ID" value="AT5G13220"/>
</dbReference>
<dbReference type="EnsemblPlants" id="AT5G13220.2">
    <molecule id="Q93ZM9-2"/>
    <property type="protein sequence ID" value="AT5G13220.2"/>
    <property type="gene ID" value="AT5G13220"/>
</dbReference>
<dbReference type="EnsemblPlants" id="AT5G13220.3">
    <molecule id="Q93ZM9-2"/>
    <property type="protein sequence ID" value="AT5G13220.3"/>
    <property type="gene ID" value="AT5G13220"/>
</dbReference>
<dbReference type="EnsemblPlants" id="AT5G13220.4">
    <molecule id="Q93ZM9-3"/>
    <property type="protein sequence ID" value="AT5G13220.4"/>
    <property type="gene ID" value="AT5G13220"/>
</dbReference>
<dbReference type="GeneID" id="831162"/>
<dbReference type="Gramene" id="AT5G13220.1">
    <molecule id="Q93ZM9-1"/>
    <property type="protein sequence ID" value="AT5G13220.1"/>
    <property type="gene ID" value="AT5G13220"/>
</dbReference>
<dbReference type="Gramene" id="AT5G13220.2">
    <molecule id="Q93ZM9-2"/>
    <property type="protein sequence ID" value="AT5G13220.2"/>
    <property type="gene ID" value="AT5G13220"/>
</dbReference>
<dbReference type="Gramene" id="AT5G13220.3">
    <molecule id="Q93ZM9-2"/>
    <property type="protein sequence ID" value="AT5G13220.3"/>
    <property type="gene ID" value="AT5G13220"/>
</dbReference>
<dbReference type="Gramene" id="AT5G13220.4">
    <molecule id="Q93ZM9-3"/>
    <property type="protein sequence ID" value="AT5G13220.4"/>
    <property type="gene ID" value="AT5G13220"/>
</dbReference>
<dbReference type="KEGG" id="ath:AT5G13220"/>
<dbReference type="Araport" id="AT5G13220"/>
<dbReference type="TAIR" id="AT5G13220">
    <property type="gene designation" value="JAZ10"/>
</dbReference>
<dbReference type="eggNOG" id="ENOG502RZEQ">
    <property type="taxonomic scope" value="Eukaryota"/>
</dbReference>
<dbReference type="HOGENOM" id="CLU_124666_0_0_1"/>
<dbReference type="InParanoid" id="Q93ZM9"/>
<dbReference type="OMA" id="LLCWIRI"/>
<dbReference type="OrthoDB" id="1914366at2759"/>
<dbReference type="PhylomeDB" id="Q93ZM9"/>
<dbReference type="PRO" id="PR:Q93ZM9"/>
<dbReference type="Proteomes" id="UP000006548">
    <property type="component" value="Chromosome 5"/>
</dbReference>
<dbReference type="ExpressionAtlas" id="Q93ZM9">
    <property type="expression patterns" value="baseline and differential"/>
</dbReference>
<dbReference type="GO" id="GO:0005634">
    <property type="term" value="C:nucleus"/>
    <property type="evidence" value="ECO:0000314"/>
    <property type="project" value="TAIR"/>
</dbReference>
<dbReference type="GO" id="GO:0042803">
    <property type="term" value="F:protein homodimerization activity"/>
    <property type="evidence" value="ECO:0000353"/>
    <property type="project" value="TAIR"/>
</dbReference>
<dbReference type="GO" id="GO:0006952">
    <property type="term" value="P:defense response"/>
    <property type="evidence" value="ECO:0007669"/>
    <property type="project" value="UniProtKB-KW"/>
</dbReference>
<dbReference type="GO" id="GO:2000022">
    <property type="term" value="P:regulation of jasmonic acid mediated signaling pathway"/>
    <property type="evidence" value="ECO:0000315"/>
    <property type="project" value="TAIR"/>
</dbReference>
<dbReference type="GO" id="GO:0010112">
    <property type="term" value="P:regulation of systemic acquired resistance"/>
    <property type="evidence" value="ECO:0000270"/>
    <property type="project" value="TAIR"/>
</dbReference>
<dbReference type="GO" id="GO:0009753">
    <property type="term" value="P:response to jasmonic acid"/>
    <property type="evidence" value="ECO:0000315"/>
    <property type="project" value="TAIR"/>
</dbReference>
<dbReference type="GO" id="GO:0009611">
    <property type="term" value="P:response to wounding"/>
    <property type="evidence" value="ECO:0000315"/>
    <property type="project" value="TAIR"/>
</dbReference>
<dbReference type="InterPro" id="IPR018467">
    <property type="entry name" value="CCT_CS"/>
</dbReference>
<dbReference type="InterPro" id="IPR040390">
    <property type="entry name" value="TIFY/JAZ"/>
</dbReference>
<dbReference type="InterPro" id="IPR010399">
    <property type="entry name" value="Tify_dom"/>
</dbReference>
<dbReference type="PANTHER" id="PTHR33077">
    <property type="entry name" value="PROTEIN TIFY 4A-RELATED-RELATED"/>
    <property type="match status" value="1"/>
</dbReference>
<dbReference type="PANTHER" id="PTHR33077:SF5">
    <property type="entry name" value="PROTEIN TIFY 9"/>
    <property type="match status" value="1"/>
</dbReference>
<dbReference type="Pfam" id="PF09425">
    <property type="entry name" value="Jas_motif"/>
    <property type="match status" value="1"/>
</dbReference>
<dbReference type="Pfam" id="PF06200">
    <property type="entry name" value="tify"/>
    <property type="match status" value="1"/>
</dbReference>
<dbReference type="SMART" id="SM00979">
    <property type="entry name" value="TIFY"/>
    <property type="match status" value="1"/>
</dbReference>
<dbReference type="PROSITE" id="PS51320">
    <property type="entry name" value="TIFY"/>
    <property type="match status" value="1"/>
</dbReference>
<feature type="chain" id="PRO_0000300651" description="Protein TIFY 9">
    <location>
        <begin position="1"/>
        <end position="197"/>
    </location>
</feature>
<feature type="domain" description="Tify" evidence="2">
    <location>
        <begin position="98"/>
        <end position="132"/>
    </location>
</feature>
<feature type="region of interest" description="Disordered" evidence="4">
    <location>
        <begin position="57"/>
        <end position="84"/>
    </location>
</feature>
<feature type="short sequence motif" description="Jas" evidence="1">
    <location>
        <begin position="168"/>
        <end position="193"/>
    </location>
</feature>
<feature type="short sequence motif" description="Nuclear localization signal" evidence="3">
    <location>
        <begin position="170"/>
        <end position="177"/>
    </location>
</feature>
<feature type="compositionally biased region" description="Polar residues" evidence="4">
    <location>
        <begin position="57"/>
        <end position="73"/>
    </location>
</feature>
<feature type="splice variant" id="VSP_053475" description="In isoform 3." evidence="14">
    <original>VILPTTLRPKLFGQNLEGDL</original>
    <variation>IFPSQGESHCNVFSRSARRD</variation>
    <location>
        <begin position="148"/>
        <end position="167"/>
    </location>
</feature>
<feature type="splice variant" id="VSP_053476" description="In isoform 3." evidence="14">
    <location>
        <begin position="168"/>
        <end position="197"/>
    </location>
</feature>
<feature type="splice variant" id="VSP_027854" description="In isoform 2." evidence="13">
    <location>
        <begin position="186"/>
        <end position="197"/>
    </location>
</feature>
<feature type="mutagenesis site" description="In isoform 3; no effect on dimerization but loss of interaction with MYC2. In isoform 1; no effect on dimerization or interaction with MYC2." evidence="11">
    <original>RRR</original>
    <variation>AAA</variation>
    <location>
        <begin position="32"/>
        <end position="34"/>
    </location>
</feature>
<feature type="mutagenesis site" description="In isoform 3; no effect on dimerization or interaction with MYC2." evidence="11">
    <original>RRR</original>
    <variation>ARA</variation>
    <location>
        <begin position="32"/>
        <end position="34"/>
    </location>
</feature>
<feature type="mutagenesis site" description="In isoform 3; no effect on dimerization or interaction with MYC2.">
    <original>RR</original>
    <variation>AA</variation>
    <location>
        <begin position="32"/>
        <end position="33"/>
    </location>
</feature>
<feature type="mutagenesis site" description="In isoform 3; no effect on dimerization or interaction with MYC2.">
    <original>RR</original>
    <variation>AA</variation>
    <location>
        <begin position="33"/>
        <end position="34"/>
    </location>
</feature>
<feature type="mutagenesis site" description="No effect on dimerization and interactions with TIFY11B/JAZ6 and AFPH2/NINJA." evidence="8 11">
    <original>T</original>
    <variation>A</variation>
    <location>
        <position position="106"/>
    </location>
</feature>
<feature type="mutagenesis site" description="Loss of dimerization, loss of interaction with TIFY11B/JAZ6 and strongly decreased interaction with AFPH2/NINJA." evidence="8 11">
    <original>I</original>
    <variation>A</variation>
    <location>
        <position position="107"/>
    </location>
</feature>
<feature type="mutagenesis site" description="No effect on dimerization and interaction with TIFY11B/JAZ6." evidence="8">
    <original>F</original>
    <variation>A</variation>
    <location>
        <position position="108"/>
    </location>
</feature>
<feature type="mutagenesis site" description="No effect on dimerization and interaction with TIFY11B/JAZ6." evidence="8">
    <original>Y</original>
    <variation>A</variation>
    <location>
        <position position="109"/>
    </location>
</feature>
<feature type="mutagenesis site" description="Loss of dimerization and loss of interaction with TIFY11B/JAZ6." evidence="8">
    <original>G</original>
    <variation>A</variation>
    <location>
        <position position="111"/>
    </location>
</feature>
<feature type="helix" evidence="16">
    <location>
        <begin position="36"/>
        <end position="44"/>
    </location>
</feature>
<feature type="helix" evidence="16">
    <location>
        <begin position="48"/>
        <end position="55"/>
    </location>
</feature>
<feature type="helix" evidence="17">
    <location>
        <begin position="169"/>
        <end position="182"/>
    </location>
</feature>
<accession>Q93ZM9</accession>
<accession>C0JPT8</accession>
<accession>Q3E9I1</accession>
<accession>Q3E9I2</accession>
<accession>Q9LYV4</accession>
<protein>
    <recommendedName>
        <fullName>Protein TIFY 9</fullName>
    </recommendedName>
    <alternativeName>
        <fullName>Jasmonate ZIM domain-containing protein 10</fullName>
    </alternativeName>
    <alternativeName>
        <fullName>Protein JASMONATE-ASSOCIATED 1</fullName>
    </alternativeName>
    <alternativeName>
        <fullName>Protein JAZ10</fullName>
    </alternativeName>
</protein>
<gene>
    <name type="primary">TIFY9</name>
    <name type="synonym">JAS1</name>
    <name type="synonym">JAZ10</name>
    <name type="ordered locus">At5g13220</name>
    <name type="ORF">T31B5.40</name>
</gene>
<keyword id="KW-0002">3D-structure</keyword>
<keyword id="KW-0025">Alternative splicing</keyword>
<keyword id="KW-1184">Jasmonic acid signaling pathway</keyword>
<keyword id="KW-0539">Nucleus</keyword>
<keyword id="KW-0611">Plant defense</keyword>
<keyword id="KW-1185">Reference proteome</keyword>
<keyword id="KW-0804">Transcription</keyword>
<keyword id="KW-0805">Transcription regulation</keyword>
<keyword id="KW-0832">Ubl conjugation</keyword>
<evidence type="ECO:0000255" key="1"/>
<evidence type="ECO:0000255" key="2">
    <source>
        <dbReference type="PROSITE-ProRule" id="PRU00650"/>
    </source>
</evidence>
<evidence type="ECO:0000255" key="3">
    <source>
        <dbReference type="PROSITE-ProRule" id="PRU00768"/>
    </source>
</evidence>
<evidence type="ECO:0000256" key="4">
    <source>
        <dbReference type="SAM" id="MobiDB-lite"/>
    </source>
</evidence>
<evidence type="ECO:0000269" key="5">
    <source>
    </source>
</evidence>
<evidence type="ECO:0000269" key="6">
    <source>
    </source>
</evidence>
<evidence type="ECO:0000269" key="7">
    <source>
    </source>
</evidence>
<evidence type="ECO:0000269" key="8">
    <source>
    </source>
</evidence>
<evidence type="ECO:0000269" key="9">
    <source>
    </source>
</evidence>
<evidence type="ECO:0000269" key="10">
    <source>
    </source>
</evidence>
<evidence type="ECO:0000269" key="11">
    <source>
    </source>
</evidence>
<evidence type="ECO:0000269" key="12">
    <source>
    </source>
</evidence>
<evidence type="ECO:0000303" key="13">
    <source>
    </source>
</evidence>
<evidence type="ECO:0000303" key="14">
    <source>
    </source>
</evidence>
<evidence type="ECO:0000305" key="15"/>
<evidence type="ECO:0007829" key="16">
    <source>
        <dbReference type="PDB" id="5T0F"/>
    </source>
</evidence>
<evidence type="ECO:0007829" key="17">
    <source>
        <dbReference type="PDB" id="5T0Q"/>
    </source>
</evidence>
<reference key="1">
    <citation type="journal article" date="2009" name="Plant Cell">
        <title>A critical role for the TIFY motif in repression of jasmonate signaling by a stabilized splice variant of the JASMONATE ZIM-domain protein JAZ10 in Arabidopsis.</title>
        <authorList>
            <person name="Chung H.S."/>
            <person name="Howe G.A."/>
        </authorList>
    </citation>
    <scope>NUCLEOTIDE SEQUENCE [MRNA] (ISOFORM 3)</scope>
    <scope>FUNCTION</scope>
    <scope>INTERACTION WITH MYC2; COI1; TIFY10A/JAZ1; TIFY10B/JAZ2; TIFY6B/JAZ3; TIFY6A/JAZ4; TIFY11B/JAZ6; TIFY5A/JAZ8; TIFY7/JAZ9; TIFY3A/JAZ11 AND TIFY3B/JAZ12</scope>
    <scope>SUBUNIT</scope>
    <scope>DOMAIN</scope>
    <scope>MUTAGENESIS OF THR-106; ILE-107; PHE-108; TYR-109 AND GLY-111</scope>
    <scope>SUBCELLULAR LOCATION</scope>
</reference>
<reference key="2">
    <citation type="journal article" date="2000" name="Nature">
        <title>Sequence and analysis of chromosome 5 of the plant Arabidopsis thaliana.</title>
        <authorList>
            <person name="Tabata S."/>
            <person name="Kaneko T."/>
            <person name="Nakamura Y."/>
            <person name="Kotani H."/>
            <person name="Kato T."/>
            <person name="Asamizu E."/>
            <person name="Miyajima N."/>
            <person name="Sasamoto S."/>
            <person name="Kimura T."/>
            <person name="Hosouchi T."/>
            <person name="Kawashima K."/>
            <person name="Kohara M."/>
            <person name="Matsumoto M."/>
            <person name="Matsuno A."/>
            <person name="Muraki A."/>
            <person name="Nakayama S."/>
            <person name="Nakazaki N."/>
            <person name="Naruo K."/>
            <person name="Okumura S."/>
            <person name="Shinpo S."/>
            <person name="Takeuchi C."/>
            <person name="Wada T."/>
            <person name="Watanabe A."/>
            <person name="Yamada M."/>
            <person name="Yasuda M."/>
            <person name="Sato S."/>
            <person name="de la Bastide M."/>
            <person name="Huang E."/>
            <person name="Spiegel L."/>
            <person name="Gnoj L."/>
            <person name="O'Shaughnessy A."/>
            <person name="Preston R."/>
            <person name="Habermann K."/>
            <person name="Murray J."/>
            <person name="Johnson D."/>
            <person name="Rohlfing T."/>
            <person name="Nelson J."/>
            <person name="Stoneking T."/>
            <person name="Pepin K."/>
            <person name="Spieth J."/>
            <person name="Sekhon M."/>
            <person name="Armstrong J."/>
            <person name="Becker M."/>
            <person name="Belter E."/>
            <person name="Cordum H."/>
            <person name="Cordes M."/>
            <person name="Courtney L."/>
            <person name="Courtney W."/>
            <person name="Dante M."/>
            <person name="Du H."/>
            <person name="Edwards J."/>
            <person name="Fryman J."/>
            <person name="Haakensen B."/>
            <person name="Lamar E."/>
            <person name="Latreille P."/>
            <person name="Leonard S."/>
            <person name="Meyer R."/>
            <person name="Mulvaney E."/>
            <person name="Ozersky P."/>
            <person name="Riley A."/>
            <person name="Strowmatt C."/>
            <person name="Wagner-McPherson C."/>
            <person name="Wollam A."/>
            <person name="Yoakum M."/>
            <person name="Bell M."/>
            <person name="Dedhia N."/>
            <person name="Parnell L."/>
            <person name="Shah R."/>
            <person name="Rodriguez M."/>
            <person name="Hoon See L."/>
            <person name="Vil D."/>
            <person name="Baker J."/>
            <person name="Kirchoff K."/>
            <person name="Toth K."/>
            <person name="King L."/>
            <person name="Bahret A."/>
            <person name="Miller B."/>
            <person name="Marra M.A."/>
            <person name="Martienssen R."/>
            <person name="McCombie W.R."/>
            <person name="Wilson R.K."/>
            <person name="Murphy G."/>
            <person name="Bancroft I."/>
            <person name="Volckaert G."/>
            <person name="Wambutt R."/>
            <person name="Duesterhoeft A."/>
            <person name="Stiekema W."/>
            <person name="Pohl T."/>
            <person name="Entian K.-D."/>
            <person name="Terryn N."/>
            <person name="Hartley N."/>
            <person name="Bent E."/>
            <person name="Johnson S."/>
            <person name="Langham S.-A."/>
            <person name="McCullagh B."/>
            <person name="Robben J."/>
            <person name="Grymonprez B."/>
            <person name="Zimmermann W."/>
            <person name="Ramsperger U."/>
            <person name="Wedler H."/>
            <person name="Balke K."/>
            <person name="Wedler E."/>
            <person name="Peters S."/>
            <person name="van Staveren M."/>
            <person name="Dirkse W."/>
            <person name="Mooijman P."/>
            <person name="Klein Lankhorst R."/>
            <person name="Weitzenegger T."/>
            <person name="Bothe G."/>
            <person name="Rose M."/>
            <person name="Hauf J."/>
            <person name="Berneiser S."/>
            <person name="Hempel S."/>
            <person name="Feldpausch M."/>
            <person name="Lamberth S."/>
            <person name="Villarroel R."/>
            <person name="Gielen J."/>
            <person name="Ardiles W."/>
            <person name="Bents O."/>
            <person name="Lemcke K."/>
            <person name="Kolesov G."/>
            <person name="Mayer K.F.X."/>
            <person name="Rudd S."/>
            <person name="Schoof H."/>
            <person name="Schueller C."/>
            <person name="Zaccaria P."/>
            <person name="Mewes H.-W."/>
            <person name="Bevan M."/>
            <person name="Fransz P.F."/>
        </authorList>
    </citation>
    <scope>NUCLEOTIDE SEQUENCE [LARGE SCALE GENOMIC DNA]</scope>
    <source>
        <strain>cv. Columbia</strain>
    </source>
</reference>
<reference key="3">
    <citation type="journal article" date="2017" name="Plant J.">
        <title>Araport11: a complete reannotation of the Arabidopsis thaliana reference genome.</title>
        <authorList>
            <person name="Cheng C.Y."/>
            <person name="Krishnakumar V."/>
            <person name="Chan A.P."/>
            <person name="Thibaud-Nissen F."/>
            <person name="Schobel S."/>
            <person name="Town C.D."/>
        </authorList>
    </citation>
    <scope>GENOME REANNOTATION</scope>
    <source>
        <strain>cv. Columbia</strain>
    </source>
</reference>
<reference key="4">
    <citation type="journal article" date="2003" name="Science">
        <title>Empirical analysis of transcriptional activity in the Arabidopsis genome.</title>
        <authorList>
            <person name="Yamada K."/>
            <person name="Lim J."/>
            <person name="Dale J.M."/>
            <person name="Chen H."/>
            <person name="Shinn P."/>
            <person name="Palm C.J."/>
            <person name="Southwick A.M."/>
            <person name="Wu H.C."/>
            <person name="Kim C.J."/>
            <person name="Nguyen M."/>
            <person name="Pham P.K."/>
            <person name="Cheuk R.F."/>
            <person name="Karlin-Newmann G."/>
            <person name="Liu S.X."/>
            <person name="Lam B."/>
            <person name="Sakano H."/>
            <person name="Wu T."/>
            <person name="Yu G."/>
            <person name="Miranda M."/>
            <person name="Quach H.L."/>
            <person name="Tripp M."/>
            <person name="Chang C.H."/>
            <person name="Lee J.M."/>
            <person name="Toriumi M.J."/>
            <person name="Chan M.M."/>
            <person name="Tang C.C."/>
            <person name="Onodera C.S."/>
            <person name="Deng J.M."/>
            <person name="Akiyama K."/>
            <person name="Ansari Y."/>
            <person name="Arakawa T."/>
            <person name="Banh J."/>
            <person name="Banno F."/>
            <person name="Bowser L."/>
            <person name="Brooks S.Y."/>
            <person name="Carninci P."/>
            <person name="Chao Q."/>
            <person name="Choy N."/>
            <person name="Enju A."/>
            <person name="Goldsmith A.D."/>
            <person name="Gurjal M."/>
            <person name="Hansen N.F."/>
            <person name="Hayashizaki Y."/>
            <person name="Johnson-Hopson C."/>
            <person name="Hsuan V.W."/>
            <person name="Iida K."/>
            <person name="Karnes M."/>
            <person name="Khan S."/>
            <person name="Koesema E."/>
            <person name="Ishida J."/>
            <person name="Jiang P.X."/>
            <person name="Jones T."/>
            <person name="Kawai J."/>
            <person name="Kamiya A."/>
            <person name="Meyers C."/>
            <person name="Nakajima M."/>
            <person name="Narusaka M."/>
            <person name="Seki M."/>
            <person name="Sakurai T."/>
            <person name="Satou M."/>
            <person name="Tamse R."/>
            <person name="Vaysberg M."/>
            <person name="Wallender E.K."/>
            <person name="Wong C."/>
            <person name="Yamamura Y."/>
            <person name="Yuan S."/>
            <person name="Shinozaki K."/>
            <person name="Davis R.W."/>
            <person name="Theologis A."/>
            <person name="Ecker J.R."/>
        </authorList>
    </citation>
    <scope>NUCLEOTIDE SEQUENCE [LARGE SCALE MRNA] (ISOFORM 1)</scope>
    <source>
        <strain>cv. Columbia</strain>
    </source>
</reference>
<reference key="5">
    <citation type="journal article" date="2004" name="Genome Res.">
        <title>Whole genome sequence comparisons and 'full-length' cDNA sequences: a combined approach to evaluate and improve Arabidopsis genome annotation.</title>
        <authorList>
            <person name="Castelli V."/>
            <person name="Aury J.-M."/>
            <person name="Jaillon O."/>
            <person name="Wincker P."/>
            <person name="Clepet C."/>
            <person name="Menard M."/>
            <person name="Cruaud C."/>
            <person name="Quetier F."/>
            <person name="Scarpelli C."/>
            <person name="Schaechter V."/>
            <person name="Temple G."/>
            <person name="Caboche M."/>
            <person name="Weissenbach J."/>
            <person name="Salanoubat M."/>
        </authorList>
    </citation>
    <scope>NUCLEOTIDE SEQUENCE [LARGE SCALE MRNA] (ISOFORM 2)</scope>
    <source>
        <strain>cv. Columbia</strain>
    </source>
</reference>
<reference key="6">
    <citation type="journal article" date="2007" name="Nature">
        <title>JAZ repressor proteins are targets of the SCF(COI1) complex during jasmonate signalling.</title>
        <authorList>
            <person name="Thines B."/>
            <person name="Katsir L."/>
            <person name="Melotto M."/>
            <person name="Niu Y."/>
            <person name="Mandaokar A."/>
            <person name="Liu G."/>
            <person name="Nomura K."/>
            <person name="He S.Y."/>
            <person name="Howe G.A."/>
            <person name="Browse J."/>
        </authorList>
    </citation>
    <scope>INDUCTION BY JASMONATE</scope>
</reference>
<reference key="7">
    <citation type="journal article" date="2007" name="Nature">
        <title>The JAZ family of repressors is the missing link in jasmonate signalling.</title>
        <authorList>
            <person name="Chini A."/>
            <person name="Fonseca S."/>
            <person name="Fernandez G."/>
            <person name="Adie B."/>
            <person name="Chico J.M."/>
            <person name="Lorenzo O."/>
            <person name="Garcia-Casado G."/>
            <person name="Lopez-Vidriero I."/>
            <person name="Lozano F.M."/>
            <person name="Ponce M.R."/>
            <person name="Micol J.L."/>
            <person name="Solano R."/>
        </authorList>
    </citation>
    <scope>GENE FAMILY</scope>
    <scope>NOMENCLATURE</scope>
</reference>
<reference key="8">
    <citation type="journal article" date="2007" name="Trends Plant Sci.">
        <title>The tify family previously known as ZIM.</title>
        <authorList>
            <person name="Vanholme B."/>
            <person name="Grunewald W."/>
            <person name="Bateman A."/>
            <person name="Kohchi T."/>
            <person name="Gheysen G."/>
        </authorList>
    </citation>
    <scope>GENE FAMILY</scope>
    <scope>NOMENCLATURE</scope>
</reference>
<reference key="9">
    <citation type="journal article" date="2007" name="Plant Cell">
        <title>A downstream mediator in the growth repression limb of the jasmonate pathway.</title>
        <authorList>
            <person name="Yan Y."/>
            <person name="Stolz S."/>
            <person name="Chetelat A."/>
            <person name="Reymond P."/>
            <person name="Pagni M."/>
            <person name="Dubugnon L."/>
            <person name="Farmer E.E."/>
        </authorList>
    </citation>
    <scope>FUNCTION</scope>
    <scope>INDUCTION</scope>
    <scope>SUBCELLULAR LOCATION</scope>
    <scope>ALTERNATIVE SPLICING</scope>
    <scope>DOMAIN</scope>
</reference>
<reference key="10">
    <citation type="journal article" date="2008" name="Plant Physiol.">
        <title>Regulation and function of Arabidopsis JASMONATE ZIM-domain genes in response to wounding and herbivory.</title>
        <authorList>
            <person name="Chung H.S."/>
            <person name="Koo A.J."/>
            <person name="Gao X."/>
            <person name="Jayanty S."/>
            <person name="Thines B."/>
            <person name="Jones A.D."/>
            <person name="Howe G.A."/>
        </authorList>
    </citation>
    <scope>INDUCTION BY WOUNDING AND HERBIVORY</scope>
</reference>
<reference key="11">
    <citation type="journal article" date="2009" name="Plant J.">
        <title>The ZIM domain mediates homo- and heteromeric interactions between Arabidopsis JAZ proteins.</title>
        <authorList>
            <person name="Chini A."/>
            <person name="Fonseca S."/>
            <person name="Chico J.M."/>
            <person name="Fernandez-Calvo P."/>
            <person name="Solano R."/>
        </authorList>
    </citation>
    <scope>INTERACTION WITH MYC2</scope>
</reference>
<reference key="12">
    <citation type="journal article" date="2010" name="Nature">
        <title>NINJA connects the co-repressor TOPLESS to jasmonate signalling.</title>
        <authorList>
            <person name="Pauwels L."/>
            <person name="Barbero G.F."/>
            <person name="Geerinck J."/>
            <person name="Tilleman S."/>
            <person name="Grunewald W."/>
            <person name="Perez A.C."/>
            <person name="Chico J.M."/>
            <person name="Bossche R.V."/>
            <person name="Sewell J."/>
            <person name="Gil E."/>
            <person name="Garcia-Casado G."/>
            <person name="Witters E."/>
            <person name="Inze D."/>
            <person name="Long J.A."/>
            <person name="De Jaeger G."/>
            <person name="Solano R."/>
            <person name="Goossens A."/>
        </authorList>
    </citation>
    <scope>INTERACTION WITH AFPH2/NINJA</scope>
</reference>
<reference key="13">
    <citation type="journal article" date="2013" name="Plant Physiol.">
        <title>Negative feedback control of jasmonate signaling by an alternative splice variant of JAZ10.</title>
        <authorList>
            <person name="Moreno J.E."/>
            <person name="Shyu C."/>
            <person name="Campos M.L."/>
            <person name="Patel L.C."/>
            <person name="Chung H.S."/>
            <person name="Yao J."/>
            <person name="He S.Y."/>
            <person name="Howe G.A."/>
        </authorList>
    </citation>
    <scope>FUNCTION</scope>
    <scope>ALTERNATIVE SPLICING</scope>
    <scope>INTERACTION WITH MYC2; MYC3; MYC4 AND AFPH2/NINJA</scope>
    <scope>MUTAGENESIS OF 32-ARG--ARG-34; THR-106 AND ILE-107</scope>
    <scope>INDUCTION BY JASMONIC ACID</scope>
</reference>
<reference key="14">
    <citation type="journal article" date="2020" name="Plant Cell">
        <title>Arabidopsis JAZ proteins interact with and suppress RHD6 transcription factor to regulate jasmonate-stimulated root hair development.</title>
        <authorList>
            <person name="Han X."/>
            <person name="Zhang M."/>
            <person name="Yang M."/>
            <person name="Hu Y."/>
        </authorList>
    </citation>
    <scope>FUNCTION</scope>
    <scope>INTERACTION WITH RHD6 AND RSL1</scope>
</reference>
<reference key="15">
    <citation type="journal article" date="2017" name="Proc. Natl. Acad. Sci. U.S.A.">
        <title>Structural insights into alternative splicing-mediated desensitization of jasmonate signaling.</title>
        <authorList>
            <person name="Zhang F."/>
            <person name="Ke J."/>
            <person name="Zhang L."/>
            <person name="Chen R."/>
            <person name="Sugimoto K."/>
            <person name="Howe G.A."/>
            <person name="Xu H.E."/>
            <person name="Zhou M."/>
            <person name="He S.Y."/>
            <person name="Melcher K."/>
        </authorList>
    </citation>
    <scope>X-RAY CRYSTALLOGRAPHY (2.15 ANGSTROMS) OF 16-58 AND 166-192</scope>
</reference>
<name>TIF9_ARATH</name>
<proteinExistence type="evidence at protein level"/>
<comment type="function">
    <molecule>Isoform 3</molecule>
    <text evidence="6 8 11">Repressor of jasmonate (JA) responses that lacks the entire Jas domain and possesses severe JA insensitivity and resistance to JA-induced degradation (PubMed:17675405, PubMed:19151223, PubMed:23632853). Acts as an endogenous repressor of JA signal output in JA-stimulated cells (PubMed:19151223). Modulator of JA-controlled growth inhibition in response to wounding (PubMed:17675405).</text>
</comment>
<comment type="function">
    <molecule>Isoform 2</molecule>
    <text evidence="8">Repressor of jasmonate (JA) responses that lacks part of the Jas domain and possesses JA insensitivity and partial resistance to JA-induced degradation.</text>
</comment>
<comment type="function">
    <text evidence="8 12">Repressor of jasmonate (JA) responses (PubMed:19151223). Interacts with and suppresses RHD6 and RSL1 transcription factor activities to negatively regulate jasmonate-stimulated root hair development (PubMed:31988260).</text>
</comment>
<comment type="subunit">
    <text evidence="8 9 10 11 12">Homo- and heterodimer. Interacts with MYC2, MYC3, MYC4, AFPH2/NINJA, TIFY10A/JAZ1, TIFY10B/JAZ2, TIFY6B/JAZ3, TIFY6A/JAZ4, TIFY11B/JAZ6, TIFY5A/JAZ8, TIFY7/JAZ9, TIFY3A/JAZ11 and TIFY3B/JAZ12. Isoform 1 and isoform 2 interact with COI1. Isoform 3 does not interact with COI1 (PubMed:19151223, PubMed:19309455, PubMed:20360743, PubMed:23632853). Interacts with RHD6 and RSL1 (PubMed:31988260).</text>
</comment>
<comment type="interaction">
    <interactant intactId="EBI-2312172">
        <id>Q93ZM9</id>
    </interactant>
    <interactant intactId="EBI-1787005">
        <id>Q9SV55</id>
        <label>AFPH2</label>
    </interactant>
    <organismsDiffer>false</organismsDiffer>
    <experiments>7</experiments>
</comment>
<comment type="interaction">
    <interactant intactId="EBI-2312172">
        <id>Q93ZM9</id>
    </interactant>
    <interactant intactId="EBI-4434261">
        <id>Q9LNJ5</id>
        <label>BHLH13</label>
    </interactant>
    <organismsDiffer>false</organismsDiffer>
    <experiments>4</experiments>
</comment>
<comment type="interaction">
    <interactant intactId="EBI-2312172">
        <id>Q93ZM9</id>
    </interactant>
    <interactant intactId="EBI-1792336">
        <id>Q39204</id>
        <label>MYC2</label>
    </interactant>
    <organismsDiffer>false</organismsDiffer>
    <experiments>2</experiments>
</comment>
<comment type="interaction">
    <interactant intactId="EBI-2312172">
        <id>Q93ZM9</id>
    </interactant>
    <interactant intactId="EBI-15406909">
        <id>O49687</id>
        <label>MYC4</label>
    </interactant>
    <organismsDiffer>false</organismsDiffer>
    <experiments>3</experiments>
</comment>
<comment type="interaction">
    <interactant intactId="EBI-2312172">
        <id>Q93ZM9</id>
    </interactant>
    <interactant intactId="EBI-4426144">
        <id>Q9C9L2</id>
        <label>TCP15</label>
    </interactant>
    <organismsDiffer>false</organismsDiffer>
    <experiments>3</experiments>
</comment>
<comment type="subcellular location">
    <subcellularLocation>
        <location evidence="3 6 8">Nucleus</location>
    </subcellularLocation>
    <text evidence="8">Isoform 1, isoform 2 and isoform 3 are localized to the nucleus.</text>
</comment>
<comment type="alternative products">
    <event type="alternative splicing"/>
    <isoform>
        <id>Q93ZM9-1</id>
        <name>1</name>
        <name>JAZ10.1</name>
        <sequence type="displayed"/>
    </isoform>
    <isoform>
        <id>Q93ZM9-2</id>
        <name>2</name>
        <name>JAZ10.3</name>
        <sequence type="described" ref="VSP_027854"/>
    </isoform>
    <isoform>
        <id>Q93ZM9-3</id>
        <name>3</name>
        <name>JAZ10.4</name>
        <sequence type="described" ref="VSP_053475 VSP_053476"/>
    </isoform>
</comment>
<comment type="induction">
    <text evidence="5 6 7 11">Up-regulated by jasmonate, wounding and herbivory.</text>
</comment>
<comment type="domain">
    <text evidence="8">The tify domain is required for dimerization.</text>
</comment>
<comment type="domain">
    <text evidence="8">The jas domain (168-193) is required for interaction with COI1.</text>
</comment>
<comment type="domain">
    <molecule>Isoform 3</molecule>
    <text evidence="8">Binds to MYC2 via a cryptic CMID domain (16-58) instead of the absent jas domain.</text>
</comment>
<comment type="PTM">
    <text evidence="11">Ubiquitinated. Targeted for degradation by the SCF(COI1) E3 ubiquitin ligase-proteasome pathway during jasmonate signaling.</text>
</comment>
<comment type="miscellaneous">
    <molecule>Isoform 3</molecule>
    <text evidence="8">Lacks the entire Jas domain and is highly resistant to jasmonate-induced degradation mediated by the 26S-proteasome pathway.</text>
</comment>
<comment type="miscellaneous">
    <molecule>Isoform 1</molecule>
    <text>Not involved in jasmonate responses regulation.</text>
</comment>
<comment type="similarity">
    <text evidence="15">Belongs to the TIFY/JAZ family.</text>
</comment>
<comment type="sequence caution" evidence="15">
    <conflict type="erroneous gene model prediction">
        <sequence resource="EMBL-CDS" id="CAB86629"/>
    </conflict>
</comment>